<accession>A3QJD3</accession>
<keyword id="KW-0131">Cell cycle</keyword>
<keyword id="KW-0132">Cell division</keyword>
<keyword id="KW-0342">GTP-binding</keyword>
<keyword id="KW-0460">Magnesium</keyword>
<keyword id="KW-0479">Metal-binding</keyword>
<keyword id="KW-0547">Nucleotide-binding</keyword>
<keyword id="KW-1185">Reference proteome</keyword>
<keyword id="KW-0717">Septation</keyword>
<comment type="function">
    <text evidence="1">Necessary for normal cell division and for the maintenance of normal septation.</text>
</comment>
<comment type="cofactor">
    <cofactor evidence="1">
        <name>Mg(2+)</name>
        <dbReference type="ChEBI" id="CHEBI:18420"/>
    </cofactor>
</comment>
<comment type="similarity">
    <text evidence="1">Belongs to the TRAFAC class TrmE-Era-EngA-EngB-Septin-like GTPase superfamily. EngB GTPase family.</text>
</comment>
<organism>
    <name type="scientific">Shewanella loihica (strain ATCC BAA-1088 / PV-4)</name>
    <dbReference type="NCBI Taxonomy" id="323850"/>
    <lineage>
        <taxon>Bacteria</taxon>
        <taxon>Pseudomonadati</taxon>
        <taxon>Pseudomonadota</taxon>
        <taxon>Gammaproteobacteria</taxon>
        <taxon>Alteromonadales</taxon>
        <taxon>Shewanellaceae</taxon>
        <taxon>Shewanella</taxon>
    </lineage>
</organism>
<name>ENGB_SHELP</name>
<dbReference type="EMBL" id="CP000606">
    <property type="protein sequence ID" value="ABO25581.1"/>
    <property type="molecule type" value="Genomic_DNA"/>
</dbReference>
<dbReference type="RefSeq" id="WP_011867509.1">
    <property type="nucleotide sequence ID" value="NC_009092.1"/>
</dbReference>
<dbReference type="SMR" id="A3QJD3"/>
<dbReference type="STRING" id="323850.Shew_3715"/>
<dbReference type="KEGG" id="slo:Shew_3715"/>
<dbReference type="eggNOG" id="COG0218">
    <property type="taxonomic scope" value="Bacteria"/>
</dbReference>
<dbReference type="HOGENOM" id="CLU_033732_1_2_6"/>
<dbReference type="OrthoDB" id="9804921at2"/>
<dbReference type="Proteomes" id="UP000001558">
    <property type="component" value="Chromosome"/>
</dbReference>
<dbReference type="GO" id="GO:0005829">
    <property type="term" value="C:cytosol"/>
    <property type="evidence" value="ECO:0007669"/>
    <property type="project" value="TreeGrafter"/>
</dbReference>
<dbReference type="GO" id="GO:0005525">
    <property type="term" value="F:GTP binding"/>
    <property type="evidence" value="ECO:0007669"/>
    <property type="project" value="UniProtKB-UniRule"/>
</dbReference>
<dbReference type="GO" id="GO:0046872">
    <property type="term" value="F:metal ion binding"/>
    <property type="evidence" value="ECO:0007669"/>
    <property type="project" value="UniProtKB-KW"/>
</dbReference>
<dbReference type="GO" id="GO:0000917">
    <property type="term" value="P:division septum assembly"/>
    <property type="evidence" value="ECO:0007669"/>
    <property type="project" value="UniProtKB-KW"/>
</dbReference>
<dbReference type="CDD" id="cd01876">
    <property type="entry name" value="YihA_EngB"/>
    <property type="match status" value="1"/>
</dbReference>
<dbReference type="FunFam" id="3.40.50.300:FF:000098">
    <property type="entry name" value="Probable GTP-binding protein EngB"/>
    <property type="match status" value="1"/>
</dbReference>
<dbReference type="Gene3D" id="3.40.50.300">
    <property type="entry name" value="P-loop containing nucleotide triphosphate hydrolases"/>
    <property type="match status" value="1"/>
</dbReference>
<dbReference type="HAMAP" id="MF_00321">
    <property type="entry name" value="GTPase_EngB"/>
    <property type="match status" value="1"/>
</dbReference>
<dbReference type="InterPro" id="IPR030393">
    <property type="entry name" value="G_ENGB_dom"/>
</dbReference>
<dbReference type="InterPro" id="IPR006073">
    <property type="entry name" value="GTP-bd"/>
</dbReference>
<dbReference type="InterPro" id="IPR019987">
    <property type="entry name" value="GTP-bd_ribosome_bio_YsxC"/>
</dbReference>
<dbReference type="InterPro" id="IPR027417">
    <property type="entry name" value="P-loop_NTPase"/>
</dbReference>
<dbReference type="NCBIfam" id="TIGR03598">
    <property type="entry name" value="GTPase_YsxC"/>
    <property type="match status" value="1"/>
</dbReference>
<dbReference type="PANTHER" id="PTHR11649:SF13">
    <property type="entry name" value="ENGB-TYPE G DOMAIN-CONTAINING PROTEIN"/>
    <property type="match status" value="1"/>
</dbReference>
<dbReference type="PANTHER" id="PTHR11649">
    <property type="entry name" value="MSS1/TRME-RELATED GTP-BINDING PROTEIN"/>
    <property type="match status" value="1"/>
</dbReference>
<dbReference type="Pfam" id="PF01926">
    <property type="entry name" value="MMR_HSR1"/>
    <property type="match status" value="1"/>
</dbReference>
<dbReference type="SUPFAM" id="SSF52540">
    <property type="entry name" value="P-loop containing nucleoside triphosphate hydrolases"/>
    <property type="match status" value="1"/>
</dbReference>
<dbReference type="PROSITE" id="PS51706">
    <property type="entry name" value="G_ENGB"/>
    <property type="match status" value="1"/>
</dbReference>
<gene>
    <name evidence="1" type="primary">engB</name>
    <name type="ordered locus">Shew_3715</name>
</gene>
<proteinExistence type="inferred from homology"/>
<sequence length="218" mass="24175">MTDSRIDFRQAKFLISAPDIAHLDEHLPGDVGVEIAFAGRSNAGKSSALNQLTEQKNLARTSKTPGRTQLINVFALDEHRRLVDLPGYGFAQVPLAMKKKWQQALGQYLQERACLSGLVVLMDIRHPLKDLDMQMIEWAVDCDIPVLALLTKCDKLAQSARMKTVNDVRKALADFGDGVKVEPFSSLKGTGKPKVLGILNEWCHPDWLVEALADAEQE</sequence>
<feature type="chain" id="PRO_1000005855" description="Probable GTP-binding protein EngB">
    <location>
        <begin position="1"/>
        <end position="218"/>
    </location>
</feature>
<feature type="domain" description="EngB-type G" evidence="1">
    <location>
        <begin position="31"/>
        <end position="205"/>
    </location>
</feature>
<feature type="binding site" evidence="1">
    <location>
        <begin position="39"/>
        <end position="46"/>
    </location>
    <ligand>
        <name>GTP</name>
        <dbReference type="ChEBI" id="CHEBI:37565"/>
    </ligand>
</feature>
<feature type="binding site" evidence="1">
    <location>
        <position position="46"/>
    </location>
    <ligand>
        <name>Mg(2+)</name>
        <dbReference type="ChEBI" id="CHEBI:18420"/>
    </ligand>
</feature>
<feature type="binding site" evidence="1">
    <location>
        <begin position="66"/>
        <end position="70"/>
    </location>
    <ligand>
        <name>GTP</name>
        <dbReference type="ChEBI" id="CHEBI:37565"/>
    </ligand>
</feature>
<feature type="binding site" evidence="1">
    <location>
        <position position="68"/>
    </location>
    <ligand>
        <name>Mg(2+)</name>
        <dbReference type="ChEBI" id="CHEBI:18420"/>
    </ligand>
</feature>
<feature type="binding site" evidence="1">
    <location>
        <begin position="84"/>
        <end position="87"/>
    </location>
    <ligand>
        <name>GTP</name>
        <dbReference type="ChEBI" id="CHEBI:37565"/>
    </ligand>
</feature>
<feature type="binding site" evidence="1">
    <location>
        <begin position="151"/>
        <end position="154"/>
    </location>
    <ligand>
        <name>GTP</name>
        <dbReference type="ChEBI" id="CHEBI:37565"/>
    </ligand>
</feature>
<feature type="binding site" evidence="1">
    <location>
        <begin position="184"/>
        <end position="186"/>
    </location>
    <ligand>
        <name>GTP</name>
        <dbReference type="ChEBI" id="CHEBI:37565"/>
    </ligand>
</feature>
<reference key="1">
    <citation type="submission" date="2007-03" db="EMBL/GenBank/DDBJ databases">
        <title>Complete sequence of Shewanella loihica PV-4.</title>
        <authorList>
            <consortium name="US DOE Joint Genome Institute"/>
            <person name="Copeland A."/>
            <person name="Lucas S."/>
            <person name="Lapidus A."/>
            <person name="Barry K."/>
            <person name="Detter J.C."/>
            <person name="Glavina del Rio T."/>
            <person name="Hammon N."/>
            <person name="Israni S."/>
            <person name="Dalin E."/>
            <person name="Tice H."/>
            <person name="Pitluck S."/>
            <person name="Chain P."/>
            <person name="Malfatti S."/>
            <person name="Shin M."/>
            <person name="Vergez L."/>
            <person name="Schmutz J."/>
            <person name="Larimer F."/>
            <person name="Land M."/>
            <person name="Hauser L."/>
            <person name="Kyrpides N."/>
            <person name="Mikhailova N."/>
            <person name="Romine M.F."/>
            <person name="Serres G."/>
            <person name="Fredrickson J."/>
            <person name="Tiedje J."/>
            <person name="Richardson P."/>
        </authorList>
    </citation>
    <scope>NUCLEOTIDE SEQUENCE [LARGE SCALE GENOMIC DNA]</scope>
    <source>
        <strain>ATCC BAA-1088 / PV-4</strain>
    </source>
</reference>
<protein>
    <recommendedName>
        <fullName evidence="1">Probable GTP-binding protein EngB</fullName>
    </recommendedName>
</protein>
<evidence type="ECO:0000255" key="1">
    <source>
        <dbReference type="HAMAP-Rule" id="MF_00321"/>
    </source>
</evidence>